<comment type="function">
    <text>Part of the insoluble cornified cell envelope (CE) of stratified squamous epithelia.</text>
</comment>
<comment type="subunit">
    <text evidence="1">Directly or indirectly cross-linked to cornifelin (CNFN).</text>
</comment>
<comment type="subcellular location">
    <subcellularLocation>
        <location>Cytoplasm</location>
    </subcellularLocation>
    <text>Constituent of the scaffolding of the cornified envelope.</text>
</comment>
<comment type="tissue specificity">
    <text>Keratinocytes of epidermis and other stratified squamous epithelia.</text>
</comment>
<comment type="PTM">
    <text>Substrate of transglutaminase. Specific glutamines or lysines are cross-linked to keratins, desmoplakin and to inter involucrin molecules.</text>
</comment>
<comment type="similarity">
    <text evidence="3">Belongs to the involucrin family.</text>
</comment>
<organism>
    <name type="scientific">Cebus albifrons</name>
    <name type="common">White-fronted capuchin</name>
    <dbReference type="NCBI Taxonomy" id="9514"/>
    <lineage>
        <taxon>Eukaryota</taxon>
        <taxon>Metazoa</taxon>
        <taxon>Chordata</taxon>
        <taxon>Craniata</taxon>
        <taxon>Vertebrata</taxon>
        <taxon>Euteleostomi</taxon>
        <taxon>Mammalia</taxon>
        <taxon>Eutheria</taxon>
        <taxon>Euarchontoglires</taxon>
        <taxon>Primates</taxon>
        <taxon>Haplorrhini</taxon>
        <taxon>Platyrrhini</taxon>
        <taxon>Cebidae</taxon>
        <taxon>Cebinae</taxon>
        <taxon>Cebus</taxon>
    </lineage>
</organism>
<dbReference type="EMBL" id="M67478">
    <property type="protein sequence ID" value="AAA35405.1"/>
    <property type="molecule type" value="Genomic_DNA"/>
</dbReference>
<dbReference type="PIR" id="I36930">
    <property type="entry name" value="I36930"/>
</dbReference>
<dbReference type="SMR" id="P24709"/>
<dbReference type="GO" id="GO:0001533">
    <property type="term" value="C:cornified envelope"/>
    <property type="evidence" value="ECO:0000250"/>
    <property type="project" value="UniProtKB"/>
</dbReference>
<dbReference type="GO" id="GO:0005737">
    <property type="term" value="C:cytoplasm"/>
    <property type="evidence" value="ECO:0007669"/>
    <property type="project" value="UniProtKB-SubCell"/>
</dbReference>
<dbReference type="GO" id="GO:0031424">
    <property type="term" value="P:keratinization"/>
    <property type="evidence" value="ECO:0007669"/>
    <property type="project" value="UniProtKB-KW"/>
</dbReference>
<dbReference type="GO" id="GO:0030216">
    <property type="term" value="P:keratinocyte differentiation"/>
    <property type="evidence" value="ECO:0000250"/>
    <property type="project" value="UniProtKB"/>
</dbReference>
<dbReference type="GO" id="GO:0018149">
    <property type="term" value="P:peptide cross-linking"/>
    <property type="evidence" value="ECO:0000250"/>
    <property type="project" value="UniProtKB"/>
</dbReference>
<dbReference type="GO" id="GO:0010224">
    <property type="term" value="P:response to UV-B"/>
    <property type="evidence" value="ECO:0000250"/>
    <property type="project" value="UniProtKB"/>
</dbReference>
<dbReference type="InterPro" id="IPR019743">
    <property type="entry name" value="Involucrin_CS"/>
</dbReference>
<dbReference type="InterPro" id="IPR019571">
    <property type="entry name" value="Involucrin_N"/>
</dbReference>
<dbReference type="InterPro" id="IPR000354">
    <property type="entry name" value="Involucrin_rpt"/>
</dbReference>
<dbReference type="Pfam" id="PF00904">
    <property type="entry name" value="Involucrin"/>
    <property type="match status" value="14"/>
</dbReference>
<dbReference type="Pfam" id="PF10583">
    <property type="entry name" value="Involucrin_N"/>
    <property type="match status" value="1"/>
</dbReference>
<dbReference type="PROSITE" id="PS00795">
    <property type="entry name" value="INVOLUCRIN"/>
    <property type="match status" value="1"/>
</dbReference>
<name>INVO_CEBAL</name>
<proteinExistence type="evidence at transcript level"/>
<accession>P24709</accession>
<keyword id="KW-0963">Cytoplasm</keyword>
<keyword id="KW-0417">Keratinization</keyword>
<keyword id="KW-0677">Repeat</keyword>
<sequence>MSQQHTLPVTLPPALSQELLNTVPPPINTQQEQREQPVPLPPPCQKVPVELPVEGPSKHEEKHVTIVKGVPEHECEQQQQAQGQERQQQHWGQNKEHQKAGNPEQQLKQEEAQREKQQLQGQLEEEKKLLDQQLDQELAKRDDQLGTKKKQLLEFPEQQEGQLKHLEQQEKPLELPEQQSGQPKYLEQQEGQLKHLEEQKGQLKHLEQQEGQLELPEQVDQPKHLEQLEKQLEHPEQQEGKLKKLEEEEEQLKHLEQQEEQLKHLEQQEGQLEHLEQQEGELKHLEQCEGQLEHLEQQEGQLELPEQQVGQSKHLEQEEKQLEHPEQQEGQLKHLGKQEAQLELPEQVGQPKHLEQQEKQLEHPEQQEEQQEGQLKDLEQQERQLEQPVFAPAPGQAQDIQQALPSKGEVLLPVDQQQQKQEVQWQQK</sequence>
<protein>
    <recommendedName>
        <fullName>Involucrin</fullName>
    </recommendedName>
</protein>
<reference key="1">
    <citation type="journal article" date="1991" name="Mol. Biol. Evol.">
        <title>The involucrin genes of the white-fronted capuchin and cottontop tamarin: the platyrrhine middle region.</title>
        <authorList>
            <person name="Phillips M."/>
            <person name="Rice R.H."/>
            <person name="Djian P."/>
            <person name="Green H."/>
        </authorList>
    </citation>
    <scope>NUCLEOTIDE SEQUENCE [GENOMIC DNA]</scope>
    <source>
        <tissue>Esophageal fibroblast</tissue>
    </source>
</reference>
<gene>
    <name type="primary">IVL</name>
</gene>
<evidence type="ECO:0000250" key="1"/>
<evidence type="ECO:0000256" key="2">
    <source>
        <dbReference type="SAM" id="MobiDB-lite"/>
    </source>
</evidence>
<evidence type="ECO:0000305" key="3"/>
<feature type="chain" id="PRO_0000159734" description="Involucrin">
    <location>
        <begin position="1"/>
        <end position="428"/>
    </location>
</feature>
<feature type="region of interest" description="Disordered" evidence="2">
    <location>
        <begin position="1"/>
        <end position="128"/>
    </location>
</feature>
<feature type="region of interest" description="Disordered" evidence="2">
    <location>
        <begin position="140"/>
        <end position="398"/>
    </location>
</feature>
<feature type="compositionally biased region" description="Basic and acidic residues" evidence="2">
    <location>
        <begin position="56"/>
        <end position="76"/>
    </location>
</feature>
<feature type="compositionally biased region" description="Low complexity" evidence="2">
    <location>
        <begin position="77"/>
        <end position="92"/>
    </location>
</feature>
<feature type="compositionally biased region" description="Basic and acidic residues" evidence="2">
    <location>
        <begin position="107"/>
        <end position="117"/>
    </location>
</feature>
<feature type="compositionally biased region" description="Basic and acidic residues" evidence="2">
    <location>
        <begin position="162"/>
        <end position="174"/>
    </location>
</feature>
<feature type="compositionally biased region" description="Basic and acidic residues" evidence="2">
    <location>
        <begin position="192"/>
        <end position="208"/>
    </location>
</feature>
<feature type="compositionally biased region" description="Low complexity" evidence="2">
    <location>
        <begin position="209"/>
        <end position="218"/>
    </location>
</feature>
<feature type="compositionally biased region" description="Basic and acidic residues" evidence="2">
    <location>
        <begin position="220"/>
        <end position="297"/>
    </location>
</feature>
<feature type="compositionally biased region" description="Low complexity" evidence="2">
    <location>
        <begin position="298"/>
        <end position="311"/>
    </location>
</feature>
<feature type="compositionally biased region" description="Basic and acidic residues" evidence="2">
    <location>
        <begin position="313"/>
        <end position="327"/>
    </location>
</feature>
<feature type="compositionally biased region" description="Basic and acidic residues" evidence="2">
    <location>
        <begin position="352"/>
        <end position="366"/>
    </location>
</feature>
<feature type="compositionally biased region" description="Basic and acidic residues" evidence="2">
    <location>
        <begin position="374"/>
        <end position="385"/>
    </location>
</feature>